<accession>Q31CC9</accession>
<protein>
    <recommendedName>
        <fullName evidence="1">Small ribosomal subunit protein uS4</fullName>
    </recommendedName>
    <alternativeName>
        <fullName evidence="3">30S ribosomal protein S4</fullName>
    </alternativeName>
</protein>
<evidence type="ECO:0000255" key="1">
    <source>
        <dbReference type="HAMAP-Rule" id="MF_01306"/>
    </source>
</evidence>
<evidence type="ECO:0000256" key="2">
    <source>
        <dbReference type="SAM" id="MobiDB-lite"/>
    </source>
</evidence>
<evidence type="ECO:0000305" key="3"/>
<proteinExistence type="inferred from homology"/>
<gene>
    <name evidence="1" type="primary">rpsD</name>
    <name evidence="1" type="synonym">rps4</name>
    <name type="ordered locus">PMT9312_0405</name>
</gene>
<sequence>MSRYRGPRLRVTRRLGELPGLTRKASKKSNPPGQHGQARRKRSEYAIRLEEKQKLRFNYGVSEKQLVRYVKKARAQEGSTGTNLLRLLENRLDNVCFRLGFGGTIPGSRQLVNHGHVTVNGKVLDIAGYQCKSGDVIGIKENKASKKLVEGNIEFPGLANVPPHLDLDKPKLTGKITGKCDREWVALEINELLVVEYYSRKV</sequence>
<name>RS4_PROM9</name>
<feature type="chain" id="PRO_0000228911" description="Small ribosomal subunit protein uS4">
    <location>
        <begin position="1"/>
        <end position="202"/>
    </location>
</feature>
<feature type="domain" description="S4 RNA-binding" evidence="1">
    <location>
        <begin position="90"/>
        <end position="152"/>
    </location>
</feature>
<feature type="region of interest" description="Disordered" evidence="2">
    <location>
        <begin position="1"/>
        <end position="42"/>
    </location>
</feature>
<feature type="compositionally biased region" description="Basic residues" evidence="2">
    <location>
        <begin position="1"/>
        <end position="13"/>
    </location>
</feature>
<reference key="1">
    <citation type="journal article" date="2006" name="Science">
        <title>Genomic islands and the ecology and evolution of Prochlorococcus.</title>
        <authorList>
            <person name="Coleman M.L."/>
            <person name="Sullivan M.B."/>
            <person name="Martiny A.C."/>
            <person name="Steglich C."/>
            <person name="Barry K."/>
            <person name="Delong E.F."/>
            <person name="Chisholm S.W."/>
        </authorList>
    </citation>
    <scope>NUCLEOTIDE SEQUENCE [LARGE SCALE GENOMIC DNA]</scope>
    <source>
        <strain>MIT 9312</strain>
    </source>
</reference>
<keyword id="KW-0687">Ribonucleoprotein</keyword>
<keyword id="KW-0689">Ribosomal protein</keyword>
<keyword id="KW-0694">RNA-binding</keyword>
<keyword id="KW-0699">rRNA-binding</keyword>
<dbReference type="EMBL" id="CP000111">
    <property type="protein sequence ID" value="ABB49466.1"/>
    <property type="molecule type" value="Genomic_DNA"/>
</dbReference>
<dbReference type="RefSeq" id="WP_011375966.1">
    <property type="nucleotide sequence ID" value="NC_007577.1"/>
</dbReference>
<dbReference type="SMR" id="Q31CC9"/>
<dbReference type="STRING" id="74546.PMT9312_0405"/>
<dbReference type="KEGG" id="pmi:PMT9312_0405"/>
<dbReference type="eggNOG" id="COG0522">
    <property type="taxonomic scope" value="Bacteria"/>
</dbReference>
<dbReference type="HOGENOM" id="CLU_092403_0_5_3"/>
<dbReference type="OrthoDB" id="9803672at2"/>
<dbReference type="Proteomes" id="UP000002715">
    <property type="component" value="Chromosome"/>
</dbReference>
<dbReference type="GO" id="GO:0015935">
    <property type="term" value="C:small ribosomal subunit"/>
    <property type="evidence" value="ECO:0007669"/>
    <property type="project" value="InterPro"/>
</dbReference>
<dbReference type="GO" id="GO:0019843">
    <property type="term" value="F:rRNA binding"/>
    <property type="evidence" value="ECO:0007669"/>
    <property type="project" value="UniProtKB-UniRule"/>
</dbReference>
<dbReference type="GO" id="GO:0003735">
    <property type="term" value="F:structural constituent of ribosome"/>
    <property type="evidence" value="ECO:0007669"/>
    <property type="project" value="InterPro"/>
</dbReference>
<dbReference type="GO" id="GO:0042274">
    <property type="term" value="P:ribosomal small subunit biogenesis"/>
    <property type="evidence" value="ECO:0007669"/>
    <property type="project" value="TreeGrafter"/>
</dbReference>
<dbReference type="GO" id="GO:0006412">
    <property type="term" value="P:translation"/>
    <property type="evidence" value="ECO:0007669"/>
    <property type="project" value="UniProtKB-UniRule"/>
</dbReference>
<dbReference type="CDD" id="cd00165">
    <property type="entry name" value="S4"/>
    <property type="match status" value="1"/>
</dbReference>
<dbReference type="FunFam" id="3.10.290.10:FF:000001">
    <property type="entry name" value="30S ribosomal protein S4"/>
    <property type="match status" value="1"/>
</dbReference>
<dbReference type="FunFam" id="1.10.1050.10:FF:000002">
    <property type="entry name" value="30S ribosomal protein S4, chloroplastic"/>
    <property type="match status" value="1"/>
</dbReference>
<dbReference type="Gene3D" id="1.10.1050.10">
    <property type="entry name" value="Ribosomal Protein S4 Delta 41, Chain A, domain 1"/>
    <property type="match status" value="1"/>
</dbReference>
<dbReference type="Gene3D" id="3.10.290.10">
    <property type="entry name" value="RNA-binding S4 domain"/>
    <property type="match status" value="1"/>
</dbReference>
<dbReference type="HAMAP" id="MF_01306_B">
    <property type="entry name" value="Ribosomal_uS4_B"/>
    <property type="match status" value="1"/>
</dbReference>
<dbReference type="InterPro" id="IPR022801">
    <property type="entry name" value="Ribosomal_uS4"/>
</dbReference>
<dbReference type="InterPro" id="IPR005709">
    <property type="entry name" value="Ribosomal_uS4_bac-type"/>
</dbReference>
<dbReference type="InterPro" id="IPR018079">
    <property type="entry name" value="Ribosomal_uS4_CS"/>
</dbReference>
<dbReference type="InterPro" id="IPR001912">
    <property type="entry name" value="Ribosomal_uS4_N"/>
</dbReference>
<dbReference type="InterPro" id="IPR002942">
    <property type="entry name" value="S4_RNA-bd"/>
</dbReference>
<dbReference type="InterPro" id="IPR036986">
    <property type="entry name" value="S4_RNA-bd_sf"/>
</dbReference>
<dbReference type="NCBIfam" id="NF003717">
    <property type="entry name" value="PRK05327.1"/>
    <property type="match status" value="1"/>
</dbReference>
<dbReference type="NCBIfam" id="TIGR01017">
    <property type="entry name" value="rpsD_bact"/>
    <property type="match status" value="1"/>
</dbReference>
<dbReference type="PANTHER" id="PTHR11831">
    <property type="entry name" value="30S 40S RIBOSOMAL PROTEIN"/>
    <property type="match status" value="1"/>
</dbReference>
<dbReference type="PANTHER" id="PTHR11831:SF4">
    <property type="entry name" value="SMALL RIBOSOMAL SUBUNIT PROTEIN US4M"/>
    <property type="match status" value="1"/>
</dbReference>
<dbReference type="Pfam" id="PF00163">
    <property type="entry name" value="Ribosomal_S4"/>
    <property type="match status" value="1"/>
</dbReference>
<dbReference type="Pfam" id="PF01479">
    <property type="entry name" value="S4"/>
    <property type="match status" value="1"/>
</dbReference>
<dbReference type="SMART" id="SM01390">
    <property type="entry name" value="Ribosomal_S4"/>
    <property type="match status" value="1"/>
</dbReference>
<dbReference type="SMART" id="SM00363">
    <property type="entry name" value="S4"/>
    <property type="match status" value="1"/>
</dbReference>
<dbReference type="SUPFAM" id="SSF55174">
    <property type="entry name" value="Alpha-L RNA-binding motif"/>
    <property type="match status" value="1"/>
</dbReference>
<dbReference type="PROSITE" id="PS00632">
    <property type="entry name" value="RIBOSOMAL_S4"/>
    <property type="match status" value="1"/>
</dbReference>
<dbReference type="PROSITE" id="PS50889">
    <property type="entry name" value="S4"/>
    <property type="match status" value="1"/>
</dbReference>
<organism>
    <name type="scientific">Prochlorococcus marinus (strain MIT 9312)</name>
    <dbReference type="NCBI Taxonomy" id="74546"/>
    <lineage>
        <taxon>Bacteria</taxon>
        <taxon>Bacillati</taxon>
        <taxon>Cyanobacteriota</taxon>
        <taxon>Cyanophyceae</taxon>
        <taxon>Synechococcales</taxon>
        <taxon>Prochlorococcaceae</taxon>
        <taxon>Prochlorococcus</taxon>
    </lineage>
</organism>
<comment type="function">
    <text evidence="1">One of the primary rRNA binding proteins, it binds directly to 16S rRNA where it nucleates assembly of the body of the 30S subunit.</text>
</comment>
<comment type="function">
    <text evidence="1">With S5 and S12 plays an important role in translational accuracy.</text>
</comment>
<comment type="subunit">
    <text evidence="1">Part of the 30S ribosomal subunit. Contacts protein S5. The interaction surface between S4 and S5 is involved in control of translational fidelity.</text>
</comment>
<comment type="similarity">
    <text evidence="1">Belongs to the universal ribosomal protein uS4 family.</text>
</comment>